<comment type="function">
    <text>In the wool cortex, wool keratin intermediate filaments are embedded in an interfilamentous matrix, consisting of hair keratin-associated proteins (KRTAP), which are essential for the formation of a rigid and resistant wool shaft through their extensive disulfide bond cross-linking with abundant cysteine residues of wool keratins. The matrix proteins include the high-sulfur and high-glycine-tyrosine keratins.</text>
</comment>
<comment type="subunit">
    <text>Interacts with wool keratins.</text>
</comment>
<comment type="tissue specificity">
    <text>Wool.</text>
</comment>
<comment type="similarity">
    <text evidence="2">Belongs to the KRTAP type 3 family.</text>
</comment>
<accession>P02446</accession>
<evidence type="ECO:0000269" key="1">
    <source>
    </source>
</evidence>
<evidence type="ECO:0000305" key="2"/>
<name>KRA31_SHEEP</name>
<dbReference type="PIR" id="A94304">
    <property type="entry name" value="KRSHH2"/>
</dbReference>
<dbReference type="iPTMnet" id="P02446"/>
<dbReference type="Proteomes" id="UP000002356">
    <property type="component" value="Unplaced"/>
</dbReference>
<dbReference type="GO" id="GO:0005829">
    <property type="term" value="C:cytosol"/>
    <property type="evidence" value="ECO:0007669"/>
    <property type="project" value="UniProtKB-ARBA"/>
</dbReference>
<dbReference type="GO" id="GO:0045095">
    <property type="term" value="C:keratin filament"/>
    <property type="evidence" value="ECO:0007669"/>
    <property type="project" value="InterPro"/>
</dbReference>
<dbReference type="GO" id="GO:0005198">
    <property type="term" value="F:structural molecule activity"/>
    <property type="evidence" value="ECO:0007669"/>
    <property type="project" value="InterPro"/>
</dbReference>
<dbReference type="InterPro" id="IPR007659">
    <property type="entry name" value="Keratin_matx"/>
</dbReference>
<dbReference type="PANTHER" id="PTHR23260">
    <property type="entry name" value="KERATIN ASSOCIATED PROTEIN 3-3-RELATED"/>
    <property type="match status" value="1"/>
</dbReference>
<dbReference type="PANTHER" id="PTHR23260:SF3">
    <property type="entry name" value="KERATIN-ASSOCIATED PROTEIN 3-1"/>
    <property type="match status" value="1"/>
</dbReference>
<dbReference type="Pfam" id="PF04579">
    <property type="entry name" value="Keratin_matx"/>
    <property type="match status" value="1"/>
</dbReference>
<feature type="initiator methionine" description="Removed" evidence="1">
    <location>
        <position position="1"/>
    </location>
</feature>
<feature type="chain" id="PRO_0000185165" description="Keratin-associated protein 3-1">
    <location>
        <begin position="2"/>
        <end position="98"/>
    </location>
</feature>
<feature type="repeat" description="1">
    <location>
        <begin position="3"/>
        <end position="7"/>
    </location>
</feature>
<feature type="repeat" description="2">
    <location>
        <begin position="8"/>
        <end position="12"/>
    </location>
</feature>
<feature type="repeat" description="3">
    <location>
        <begin position="47"/>
        <end position="51"/>
    </location>
</feature>
<feature type="repeat" description="4">
    <location>
        <begin position="55"/>
        <end position="59"/>
    </location>
</feature>
<feature type="region of interest" description="4 X 5 AA repeats of C-C-X(3)">
    <location>
        <begin position="3"/>
        <end position="59"/>
    </location>
</feature>
<feature type="modified residue" description="N-acetylalanine" evidence="1">
    <location>
        <position position="2"/>
    </location>
</feature>
<feature type="sequence variant">
    <original>C</original>
    <variation>T</variation>
    <location>
        <position position="65"/>
    </location>
</feature>
<protein>
    <recommendedName>
        <fullName>Keratin-associated protein 3-1</fullName>
    </recommendedName>
    <alternativeName>
        <fullName>Keratin, high sulfur matrix protein, IIIB2</fullName>
    </alternativeName>
</protein>
<gene>
    <name type="primary">KRTAP3-1</name>
</gene>
<keyword id="KW-0007">Acetylation</keyword>
<keyword id="KW-0903">Direct protein sequencing</keyword>
<keyword id="KW-0416">Keratin</keyword>
<keyword id="KW-1185">Reference proteome</keyword>
<keyword id="KW-0677">Repeat</keyword>
<reference key="1">
    <citation type="journal article" date="1969" name="Text. Res. J.">
        <title>Studies on the high-sulfur proteins of reduced merino wool. Part III: the amino-acid sequence of protein SCMKB-IIIB2.</title>
        <authorList>
            <person name="Haylett T."/>
            <person name="Swart L.S."/>
        </authorList>
    </citation>
    <scope>PROTEIN SEQUENCE OF 2-98</scope>
    <source>
        <strain>Merino</strain>
    </source>
</reference>
<reference key="2">
    <citation type="journal article" date="1972" name="Biochem. J.">
        <title>The amino acid sequence of protein SCMK-B2C from the high-sulphur fraction of wool keratin.</title>
        <authorList>
            <person name="Elleman T.C."/>
        </authorList>
    </citation>
    <scope>PROTEIN SEQUENCE OF 2-98</scope>
    <scope>ACETYLATION AT ALA-2</scope>
</reference>
<proteinExistence type="evidence at protein level"/>
<organism>
    <name type="scientific">Ovis aries</name>
    <name type="common">Sheep</name>
    <dbReference type="NCBI Taxonomy" id="9940"/>
    <lineage>
        <taxon>Eukaryota</taxon>
        <taxon>Metazoa</taxon>
        <taxon>Chordata</taxon>
        <taxon>Craniata</taxon>
        <taxon>Vertebrata</taxon>
        <taxon>Euteleostomi</taxon>
        <taxon>Mammalia</taxon>
        <taxon>Eutheria</taxon>
        <taxon>Laurasiatheria</taxon>
        <taxon>Artiodactyla</taxon>
        <taxon>Ruminantia</taxon>
        <taxon>Pecora</taxon>
        <taxon>Bovidae</taxon>
        <taxon>Caprinae</taxon>
        <taxon>Ovis</taxon>
    </lineage>
</organism>
<sequence length="98" mass="10420">MACCAPRCCSVRTGPATTICSSDKFCRCGVCLPSTCPHNISLLQPTCCDNSPVPCVYPDTYVPTCFLLNSSHPTPGLSGINLTTFIQPGCENVCEPRC</sequence>